<accession>P28735</accession>
<keyword id="KW-0028">Amino-acid biosynthesis</keyword>
<keyword id="KW-0032">Aminotransferase</keyword>
<keyword id="KW-0368">Histidine biosynthesis</keyword>
<keyword id="KW-0663">Pyridoxal phosphate</keyword>
<keyword id="KW-0808">Transferase</keyword>
<proteinExistence type="inferred from homology"/>
<protein>
    <recommendedName>
        <fullName>Histidinol-phosphate aminotransferase</fullName>
        <ecNumber>2.6.1.9</ecNumber>
    </recommendedName>
    <alternativeName>
        <fullName>Imidazole acetol-phosphate transaminase</fullName>
    </alternativeName>
</protein>
<reference key="1">
    <citation type="journal article" date="1992" name="Mol. Microbiol.">
        <title>Cloning of mycobacterial histidine synthesis genes by complementation of a Mycobacterium smegmatis auxotroph.</title>
        <authorList>
            <person name="Hinshelwood S."/>
            <person name="Stoker N.G."/>
        </authorList>
    </citation>
    <scope>NUCLEOTIDE SEQUENCE [GENOMIC DNA]</scope>
    <source>
        <strain>ATCC 607 / DSM 43465 / JCM 20379 / NBRC 3207 / NRRL B-692</strain>
    </source>
</reference>
<name>HIS8_MYCSM</name>
<dbReference type="EC" id="2.6.1.9"/>
<dbReference type="EMBL" id="X65542">
    <property type="protein sequence ID" value="CAA46510.1"/>
    <property type="molecule type" value="Genomic_DNA"/>
</dbReference>
<dbReference type="PIR" id="S26210">
    <property type="entry name" value="S26210"/>
</dbReference>
<dbReference type="SMR" id="P28735"/>
<dbReference type="UniPathway" id="UPA00031">
    <property type="reaction ID" value="UER00012"/>
</dbReference>
<dbReference type="GO" id="GO:0004400">
    <property type="term" value="F:histidinol-phosphate transaminase activity"/>
    <property type="evidence" value="ECO:0007669"/>
    <property type="project" value="UniProtKB-EC"/>
</dbReference>
<dbReference type="GO" id="GO:0030170">
    <property type="term" value="F:pyridoxal phosphate binding"/>
    <property type="evidence" value="ECO:0007669"/>
    <property type="project" value="InterPro"/>
</dbReference>
<dbReference type="GO" id="GO:0000105">
    <property type="term" value="P:L-histidine biosynthetic process"/>
    <property type="evidence" value="ECO:0007669"/>
    <property type="project" value="UniProtKB-UniPathway"/>
</dbReference>
<dbReference type="CDD" id="cd00609">
    <property type="entry name" value="AAT_like"/>
    <property type="match status" value="1"/>
</dbReference>
<dbReference type="Gene3D" id="3.90.1150.10">
    <property type="entry name" value="Aspartate Aminotransferase, domain 1"/>
    <property type="match status" value="1"/>
</dbReference>
<dbReference type="Gene3D" id="3.40.640.10">
    <property type="entry name" value="Type I PLP-dependent aspartate aminotransferase-like (Major domain)"/>
    <property type="match status" value="1"/>
</dbReference>
<dbReference type="InterPro" id="IPR004839">
    <property type="entry name" value="Aminotransferase_I/II_large"/>
</dbReference>
<dbReference type="InterPro" id="IPR015424">
    <property type="entry name" value="PyrdxlP-dep_Trfase"/>
</dbReference>
<dbReference type="InterPro" id="IPR015421">
    <property type="entry name" value="PyrdxlP-dep_Trfase_major"/>
</dbReference>
<dbReference type="InterPro" id="IPR015422">
    <property type="entry name" value="PyrdxlP-dep_Trfase_small"/>
</dbReference>
<dbReference type="PANTHER" id="PTHR42885:SF2">
    <property type="entry name" value="HISTIDINOL-PHOSPHATE AMINOTRANSFERASE"/>
    <property type="match status" value="1"/>
</dbReference>
<dbReference type="PANTHER" id="PTHR42885">
    <property type="entry name" value="HISTIDINOL-PHOSPHATE AMINOTRANSFERASE-RELATED"/>
    <property type="match status" value="1"/>
</dbReference>
<dbReference type="Pfam" id="PF00155">
    <property type="entry name" value="Aminotran_1_2"/>
    <property type="match status" value="1"/>
</dbReference>
<dbReference type="SUPFAM" id="SSF53383">
    <property type="entry name" value="PLP-dependent transferases"/>
    <property type="match status" value="1"/>
</dbReference>
<evidence type="ECO:0000250" key="1"/>
<evidence type="ECO:0000305" key="2"/>
<comment type="catalytic activity">
    <reaction>
        <text>L-histidinol phosphate + 2-oxoglutarate = 3-(imidazol-4-yl)-2-oxopropyl phosphate + L-glutamate</text>
        <dbReference type="Rhea" id="RHEA:23744"/>
        <dbReference type="ChEBI" id="CHEBI:16810"/>
        <dbReference type="ChEBI" id="CHEBI:29985"/>
        <dbReference type="ChEBI" id="CHEBI:57766"/>
        <dbReference type="ChEBI" id="CHEBI:57980"/>
        <dbReference type="EC" id="2.6.1.9"/>
    </reaction>
</comment>
<comment type="cofactor">
    <cofactor evidence="1">
        <name>pyridoxal 5'-phosphate</name>
        <dbReference type="ChEBI" id="CHEBI:597326"/>
    </cofactor>
</comment>
<comment type="pathway">
    <text>Amino-acid biosynthesis; L-histidine biosynthesis; L-histidine from 5-phospho-alpha-D-ribose 1-diphosphate: step 7/9.</text>
</comment>
<comment type="subunit">
    <text evidence="1">Homodimer.</text>
</comment>
<comment type="similarity">
    <text evidence="2">Belongs to the class-II pyridoxal-phosphate-dependent aminotransferase family. Histidinol-phosphate aminotransferase subfamily.</text>
</comment>
<feature type="chain" id="PRO_0000153396" description="Histidinol-phosphate aminotransferase">
    <location>
        <begin position="1"/>
        <end position="219" status="greater than"/>
    </location>
</feature>
<feature type="non-terminal residue">
    <location>
        <position position="219"/>
    </location>
</feature>
<sequence length="219" mass="23463">MSADKVTLADLPLRDNLRGKSPYGAPQLQVPVRLNTNENPHPPSKALVDDVAASVREAAAELHRYPDRDAVALRTDLAAYLTAATGVRLGVENLWAANGSNEILQQLLQAFGGPGRTAIGFVPSYSMHPIISDGTQTEWLQASRAEDFGLDIDVAVSAVTERKPDVVFVTSPNNPSGQSVPLDDLRRVLDAMQGGILIVDEAYGEFSSQPSAVALLDDY</sequence>
<organism>
    <name type="scientific">Mycolicibacterium smegmatis</name>
    <name type="common">Mycobacterium smegmatis</name>
    <dbReference type="NCBI Taxonomy" id="1772"/>
    <lineage>
        <taxon>Bacteria</taxon>
        <taxon>Bacillati</taxon>
        <taxon>Actinomycetota</taxon>
        <taxon>Actinomycetes</taxon>
        <taxon>Mycobacteriales</taxon>
        <taxon>Mycobacteriaceae</taxon>
        <taxon>Mycolicibacterium</taxon>
    </lineage>
</organism>
<gene>
    <name type="primary">hisC</name>
</gene>